<dbReference type="EMBL" id="CP001287">
    <property type="protein sequence ID" value="ACK64110.1"/>
    <property type="molecule type" value="Genomic_DNA"/>
</dbReference>
<dbReference type="RefSeq" id="WP_012593387.1">
    <property type="nucleotide sequence ID" value="NC_011726.1"/>
</dbReference>
<dbReference type="SMR" id="B7JYF1"/>
<dbReference type="STRING" id="41431.PCC8801_0003"/>
<dbReference type="KEGG" id="cyp:PCC8801_0003"/>
<dbReference type="eggNOG" id="COG0593">
    <property type="taxonomic scope" value="Bacteria"/>
</dbReference>
<dbReference type="HOGENOM" id="CLU_026910_3_1_3"/>
<dbReference type="OrthoDB" id="9807019at2"/>
<dbReference type="Proteomes" id="UP000008204">
    <property type="component" value="Chromosome"/>
</dbReference>
<dbReference type="GO" id="GO:0005737">
    <property type="term" value="C:cytoplasm"/>
    <property type="evidence" value="ECO:0007669"/>
    <property type="project" value="UniProtKB-SubCell"/>
</dbReference>
<dbReference type="GO" id="GO:0005886">
    <property type="term" value="C:plasma membrane"/>
    <property type="evidence" value="ECO:0007669"/>
    <property type="project" value="TreeGrafter"/>
</dbReference>
<dbReference type="GO" id="GO:0005524">
    <property type="term" value="F:ATP binding"/>
    <property type="evidence" value="ECO:0007669"/>
    <property type="project" value="UniProtKB-UniRule"/>
</dbReference>
<dbReference type="GO" id="GO:0016887">
    <property type="term" value="F:ATP hydrolysis activity"/>
    <property type="evidence" value="ECO:0007669"/>
    <property type="project" value="InterPro"/>
</dbReference>
<dbReference type="GO" id="GO:0003688">
    <property type="term" value="F:DNA replication origin binding"/>
    <property type="evidence" value="ECO:0007669"/>
    <property type="project" value="UniProtKB-UniRule"/>
</dbReference>
<dbReference type="GO" id="GO:0008289">
    <property type="term" value="F:lipid binding"/>
    <property type="evidence" value="ECO:0007669"/>
    <property type="project" value="UniProtKB-KW"/>
</dbReference>
<dbReference type="GO" id="GO:0006270">
    <property type="term" value="P:DNA replication initiation"/>
    <property type="evidence" value="ECO:0007669"/>
    <property type="project" value="UniProtKB-UniRule"/>
</dbReference>
<dbReference type="GO" id="GO:0006275">
    <property type="term" value="P:regulation of DNA replication"/>
    <property type="evidence" value="ECO:0007669"/>
    <property type="project" value="UniProtKB-UniRule"/>
</dbReference>
<dbReference type="CDD" id="cd00009">
    <property type="entry name" value="AAA"/>
    <property type="match status" value="1"/>
</dbReference>
<dbReference type="CDD" id="cd06571">
    <property type="entry name" value="Bac_DnaA_C"/>
    <property type="match status" value="1"/>
</dbReference>
<dbReference type="FunFam" id="3.40.50.300:FF:000150">
    <property type="entry name" value="Chromosomal replication initiator protein DnaA"/>
    <property type="match status" value="1"/>
</dbReference>
<dbReference type="Gene3D" id="1.10.1750.10">
    <property type="match status" value="1"/>
</dbReference>
<dbReference type="Gene3D" id="1.10.8.60">
    <property type="match status" value="1"/>
</dbReference>
<dbReference type="Gene3D" id="3.30.300.180">
    <property type="match status" value="1"/>
</dbReference>
<dbReference type="Gene3D" id="3.40.50.300">
    <property type="entry name" value="P-loop containing nucleotide triphosphate hydrolases"/>
    <property type="match status" value="1"/>
</dbReference>
<dbReference type="HAMAP" id="MF_00377">
    <property type="entry name" value="DnaA_bact"/>
    <property type="match status" value="1"/>
</dbReference>
<dbReference type="InterPro" id="IPR003593">
    <property type="entry name" value="AAA+_ATPase"/>
</dbReference>
<dbReference type="InterPro" id="IPR001957">
    <property type="entry name" value="Chromosome_initiator_DnaA"/>
</dbReference>
<dbReference type="InterPro" id="IPR020591">
    <property type="entry name" value="Chromosome_initiator_DnaA-like"/>
</dbReference>
<dbReference type="InterPro" id="IPR018312">
    <property type="entry name" value="Chromosome_initiator_DnaA_CS"/>
</dbReference>
<dbReference type="InterPro" id="IPR013159">
    <property type="entry name" value="DnaA_C"/>
</dbReference>
<dbReference type="InterPro" id="IPR013317">
    <property type="entry name" value="DnaA_dom"/>
</dbReference>
<dbReference type="InterPro" id="IPR024633">
    <property type="entry name" value="DnaA_N_dom"/>
</dbReference>
<dbReference type="InterPro" id="IPR038454">
    <property type="entry name" value="DnaA_N_sf"/>
</dbReference>
<dbReference type="InterPro" id="IPR027417">
    <property type="entry name" value="P-loop_NTPase"/>
</dbReference>
<dbReference type="InterPro" id="IPR010921">
    <property type="entry name" value="Trp_repressor/repl_initiator"/>
</dbReference>
<dbReference type="NCBIfam" id="TIGR00362">
    <property type="entry name" value="DnaA"/>
    <property type="match status" value="1"/>
</dbReference>
<dbReference type="PANTHER" id="PTHR30050">
    <property type="entry name" value="CHROMOSOMAL REPLICATION INITIATOR PROTEIN DNAA"/>
    <property type="match status" value="1"/>
</dbReference>
<dbReference type="PANTHER" id="PTHR30050:SF2">
    <property type="entry name" value="CHROMOSOMAL REPLICATION INITIATOR PROTEIN DNAA"/>
    <property type="match status" value="1"/>
</dbReference>
<dbReference type="Pfam" id="PF00308">
    <property type="entry name" value="Bac_DnaA"/>
    <property type="match status" value="1"/>
</dbReference>
<dbReference type="Pfam" id="PF08299">
    <property type="entry name" value="Bac_DnaA_C"/>
    <property type="match status" value="1"/>
</dbReference>
<dbReference type="Pfam" id="PF11638">
    <property type="entry name" value="DnaA_N"/>
    <property type="match status" value="1"/>
</dbReference>
<dbReference type="PRINTS" id="PR00051">
    <property type="entry name" value="DNAA"/>
</dbReference>
<dbReference type="SMART" id="SM00382">
    <property type="entry name" value="AAA"/>
    <property type="match status" value="1"/>
</dbReference>
<dbReference type="SMART" id="SM00760">
    <property type="entry name" value="Bac_DnaA_C"/>
    <property type="match status" value="1"/>
</dbReference>
<dbReference type="SUPFAM" id="SSF52540">
    <property type="entry name" value="P-loop containing nucleoside triphosphate hydrolases"/>
    <property type="match status" value="1"/>
</dbReference>
<dbReference type="SUPFAM" id="SSF48295">
    <property type="entry name" value="TrpR-like"/>
    <property type="match status" value="1"/>
</dbReference>
<dbReference type="PROSITE" id="PS01008">
    <property type="entry name" value="DNAA"/>
    <property type="match status" value="1"/>
</dbReference>
<organism>
    <name type="scientific">Rippkaea orientalis (strain PCC 8801 / RF-1)</name>
    <name type="common">Cyanothece sp. (strain PCC 8801)</name>
    <dbReference type="NCBI Taxonomy" id="41431"/>
    <lineage>
        <taxon>Bacteria</taxon>
        <taxon>Bacillati</taxon>
        <taxon>Cyanobacteriota</taxon>
        <taxon>Cyanophyceae</taxon>
        <taxon>Oscillatoriophycideae</taxon>
        <taxon>Chroococcales</taxon>
        <taxon>Aphanothecaceae</taxon>
        <taxon>Rippkaea</taxon>
        <taxon>Rippkaea orientalis</taxon>
    </lineage>
</organism>
<accession>B7JYF1</accession>
<proteinExistence type="inferred from homology"/>
<sequence>MNISPQYLWNQVLERLQIRLTRPAFETWIQDATVQEWKDNCLVIQVANSFILNHLQKTYQPIIAQEVASVVGYPVDIQLTTAEGETMAMTGEAQSYQEKSLTQIAPESPKLNQLNPRYTFSRFVVGPTNRMAHAASLAVAESPGREFNPLFLCGGVGLGKTHLMQAIAHYRLELYPNAKVFYVSTEQFTNDLIAAIRQDSMERFREHYRRADFLLIDDIQFIEGKEYTQEELFHTFNTLHEAGKQVVLASDRAPKRIPTLQDRLISRFSMGLIADIQVPDLETRMAILQKKAQYENMRLPRDVVEYIATNYTSNIRELEGALIRAIAYTSISGLSMTVQNIAPVLNPPVEQVPASPEVILRTVAESLKVSIEDLKGSSRRREISFARQVGMYLMRQHTELSLPRIGEEFGGKDHTTVLYSCDKISKLQQKDWELSQMLSELSDRINMASRTQS</sequence>
<comment type="function">
    <text evidence="1">Plays an essential role in the initiation and regulation of chromosomal replication. ATP-DnaA binds to the origin of replication (oriC) to initiate formation of the DNA replication initiation complex once per cell cycle. Binds the DnaA box (a 9 base pair repeat at the origin) and separates the double-stranded (ds)DNA. Forms a right-handed helical filament on oriC DNA; dsDNA binds to the exterior of the filament while single-stranded (ss)DNA is stabiized in the filament's interior. The ATP-DnaA-oriC complex binds and stabilizes one strand of the AT-rich DNA unwinding element (DUE), permitting loading of DNA polymerase. After initiation quickly degrades to an ADP-DnaA complex that is not apt for DNA replication. Binds acidic phospholipids.</text>
</comment>
<comment type="subunit">
    <text evidence="1">Oligomerizes as a right-handed, spiral filament on DNA at oriC.</text>
</comment>
<comment type="subcellular location">
    <subcellularLocation>
        <location evidence="1">Cytoplasm</location>
    </subcellularLocation>
</comment>
<comment type="domain">
    <text evidence="1">Domain I is involved in oligomerization and binding regulators, domain II is flexibile and of varying length in different bacteria, domain III forms the AAA+ region, while domain IV binds dsDNA.</text>
</comment>
<comment type="similarity">
    <text evidence="1">Belongs to the DnaA family.</text>
</comment>
<gene>
    <name evidence="1" type="primary">dnaA</name>
    <name type="ordered locus">PCC8801_0003</name>
</gene>
<feature type="chain" id="PRO_1000121970" description="Chromosomal replication initiator protein DnaA">
    <location>
        <begin position="1"/>
        <end position="453"/>
    </location>
</feature>
<feature type="region of interest" description="Domain I, interacts with DnaA modulators" evidence="1">
    <location>
        <begin position="1"/>
        <end position="73"/>
    </location>
</feature>
<feature type="region of interest" description="Domain II" evidence="1">
    <location>
        <begin position="73"/>
        <end position="112"/>
    </location>
</feature>
<feature type="region of interest" description="Domain III, AAA+ region" evidence="1">
    <location>
        <begin position="113"/>
        <end position="329"/>
    </location>
</feature>
<feature type="region of interest" description="Domain IV, binds dsDNA" evidence="1">
    <location>
        <begin position="330"/>
        <end position="453"/>
    </location>
</feature>
<feature type="binding site" evidence="1">
    <location>
        <position position="157"/>
    </location>
    <ligand>
        <name>ATP</name>
        <dbReference type="ChEBI" id="CHEBI:30616"/>
    </ligand>
</feature>
<feature type="binding site" evidence="1">
    <location>
        <position position="159"/>
    </location>
    <ligand>
        <name>ATP</name>
        <dbReference type="ChEBI" id="CHEBI:30616"/>
    </ligand>
</feature>
<feature type="binding site" evidence="1">
    <location>
        <position position="160"/>
    </location>
    <ligand>
        <name>ATP</name>
        <dbReference type="ChEBI" id="CHEBI:30616"/>
    </ligand>
</feature>
<feature type="binding site" evidence="1">
    <location>
        <position position="161"/>
    </location>
    <ligand>
        <name>ATP</name>
        <dbReference type="ChEBI" id="CHEBI:30616"/>
    </ligand>
</feature>
<reference key="1">
    <citation type="journal article" date="2011" name="MBio">
        <title>Novel metabolic attributes of the genus Cyanothece, comprising a group of unicellular nitrogen-fixing Cyanobacteria.</title>
        <authorList>
            <person name="Bandyopadhyay A."/>
            <person name="Elvitigala T."/>
            <person name="Welsh E."/>
            <person name="Stockel J."/>
            <person name="Liberton M."/>
            <person name="Min H."/>
            <person name="Sherman L.A."/>
            <person name="Pakrasi H.B."/>
        </authorList>
    </citation>
    <scope>NUCLEOTIDE SEQUENCE [LARGE SCALE GENOMIC DNA]</scope>
    <source>
        <strain>PCC 8801 / RF-1</strain>
    </source>
</reference>
<keyword id="KW-0067">ATP-binding</keyword>
<keyword id="KW-0963">Cytoplasm</keyword>
<keyword id="KW-0235">DNA replication</keyword>
<keyword id="KW-0238">DNA-binding</keyword>
<keyword id="KW-0446">Lipid-binding</keyword>
<keyword id="KW-0547">Nucleotide-binding</keyword>
<keyword id="KW-1185">Reference proteome</keyword>
<protein>
    <recommendedName>
        <fullName evidence="1">Chromosomal replication initiator protein DnaA</fullName>
    </recommendedName>
</protein>
<evidence type="ECO:0000255" key="1">
    <source>
        <dbReference type="HAMAP-Rule" id="MF_00377"/>
    </source>
</evidence>
<name>DNAA_RIPO1</name>